<organism>
    <name type="scientific">Arabidopsis thaliana</name>
    <name type="common">Mouse-ear cress</name>
    <dbReference type="NCBI Taxonomy" id="3702"/>
    <lineage>
        <taxon>Eukaryota</taxon>
        <taxon>Viridiplantae</taxon>
        <taxon>Streptophyta</taxon>
        <taxon>Embryophyta</taxon>
        <taxon>Tracheophyta</taxon>
        <taxon>Spermatophyta</taxon>
        <taxon>Magnoliopsida</taxon>
        <taxon>eudicotyledons</taxon>
        <taxon>Gunneridae</taxon>
        <taxon>Pentapetalae</taxon>
        <taxon>rosids</taxon>
        <taxon>malvids</taxon>
        <taxon>Brassicales</taxon>
        <taxon>Brassicaceae</taxon>
        <taxon>Camelineae</taxon>
        <taxon>Arabidopsis</taxon>
    </lineage>
</organism>
<proteinExistence type="inferred from homology"/>
<accession>Q9FLY5</accession>
<dbReference type="EMBL" id="AB009054">
    <property type="protein sequence ID" value="BAB11025.1"/>
    <property type="molecule type" value="Genomic_DNA"/>
</dbReference>
<dbReference type="EMBL" id="CP002688">
    <property type="protein sequence ID" value="AED94441.1"/>
    <property type="molecule type" value="Genomic_DNA"/>
</dbReference>
<dbReference type="EMBL" id="CP002688">
    <property type="protein sequence ID" value="ANM69458.1"/>
    <property type="molecule type" value="Genomic_DNA"/>
</dbReference>
<dbReference type="RefSeq" id="NP_001318705.1">
    <property type="nucleotide sequence ID" value="NM_001344295.1"/>
</dbReference>
<dbReference type="RefSeq" id="NP_198766.1">
    <property type="nucleotide sequence ID" value="NM_123312.2"/>
</dbReference>
<dbReference type="SMR" id="Q9FLY5"/>
<dbReference type="FunCoup" id="Q9FLY5">
    <property type="interactions" value="4295"/>
</dbReference>
<dbReference type="STRING" id="3702.Q9FLY5"/>
<dbReference type="GlyGen" id="Q9FLY5">
    <property type="glycosylation" value="1 site"/>
</dbReference>
<dbReference type="iPTMnet" id="Q9FLY5"/>
<dbReference type="PaxDb" id="3702-AT5G39500.1"/>
<dbReference type="ProteomicsDB" id="248536"/>
<dbReference type="EnsemblPlants" id="AT5G39500.1">
    <property type="protein sequence ID" value="AT5G39500.1"/>
    <property type="gene ID" value="AT5G39500"/>
</dbReference>
<dbReference type="EnsemblPlants" id="AT5G39500.2">
    <property type="protein sequence ID" value="AT5G39500.2"/>
    <property type="gene ID" value="AT5G39500"/>
</dbReference>
<dbReference type="GeneID" id="833946"/>
<dbReference type="Gramene" id="AT5G39500.1">
    <property type="protein sequence ID" value="AT5G39500.1"/>
    <property type="gene ID" value="AT5G39500"/>
</dbReference>
<dbReference type="Gramene" id="AT5G39500.2">
    <property type="protein sequence ID" value="AT5G39500.2"/>
    <property type="gene ID" value="AT5G39500"/>
</dbReference>
<dbReference type="KEGG" id="ath:AT5G39500"/>
<dbReference type="Araport" id="AT5G39500"/>
<dbReference type="TAIR" id="AT5G39500">
    <property type="gene designation" value="GNL1"/>
</dbReference>
<dbReference type="eggNOG" id="KOG0928">
    <property type="taxonomic scope" value="Eukaryota"/>
</dbReference>
<dbReference type="HOGENOM" id="CLU_001204_1_0_1"/>
<dbReference type="InParanoid" id="Q9FLY5"/>
<dbReference type="OMA" id="ILWTRSP"/>
<dbReference type="PhylomeDB" id="Q9FLY5"/>
<dbReference type="PRO" id="PR:Q9FLY5"/>
<dbReference type="Proteomes" id="UP000006548">
    <property type="component" value="Chromosome 5"/>
</dbReference>
<dbReference type="ExpressionAtlas" id="Q9FLY5">
    <property type="expression patterns" value="baseline and differential"/>
</dbReference>
<dbReference type="GO" id="GO:0005829">
    <property type="term" value="C:cytosol"/>
    <property type="evidence" value="ECO:0007669"/>
    <property type="project" value="UniProtKB-SubCell"/>
</dbReference>
<dbReference type="GO" id="GO:0005794">
    <property type="term" value="C:Golgi apparatus"/>
    <property type="evidence" value="ECO:0000314"/>
    <property type="project" value="UniProtKB"/>
</dbReference>
<dbReference type="GO" id="GO:0000139">
    <property type="term" value="C:Golgi membrane"/>
    <property type="evidence" value="ECO:0007669"/>
    <property type="project" value="UniProtKB-SubCell"/>
</dbReference>
<dbReference type="GO" id="GO:0005085">
    <property type="term" value="F:guanyl-nucleotide exchange factor activity"/>
    <property type="evidence" value="ECO:0007669"/>
    <property type="project" value="UniProtKB-KW"/>
</dbReference>
<dbReference type="GO" id="GO:0006897">
    <property type="term" value="P:endocytosis"/>
    <property type="evidence" value="ECO:0000315"/>
    <property type="project" value="UniProtKB"/>
</dbReference>
<dbReference type="GO" id="GO:0080119">
    <property type="term" value="P:ER body organization"/>
    <property type="evidence" value="ECO:0000315"/>
    <property type="project" value="TAIR"/>
</dbReference>
<dbReference type="GO" id="GO:0015031">
    <property type="term" value="P:protein transport"/>
    <property type="evidence" value="ECO:0007669"/>
    <property type="project" value="UniProtKB-KW"/>
</dbReference>
<dbReference type="GO" id="GO:0032012">
    <property type="term" value="P:regulation of ARF protein signal transduction"/>
    <property type="evidence" value="ECO:0007669"/>
    <property type="project" value="InterPro"/>
</dbReference>
<dbReference type="GO" id="GO:0006890">
    <property type="term" value="P:retrograde vesicle-mediated transport, Golgi to endoplasmic reticulum"/>
    <property type="evidence" value="ECO:0000315"/>
    <property type="project" value="UniProtKB"/>
</dbReference>
<dbReference type="CDD" id="cd00171">
    <property type="entry name" value="Sec7"/>
    <property type="match status" value="1"/>
</dbReference>
<dbReference type="FunFam" id="1.10.220.20:FF:000005">
    <property type="entry name" value="ARF guanine-nucleotide exchange factor GNOM"/>
    <property type="match status" value="1"/>
</dbReference>
<dbReference type="FunFam" id="1.10.1000.11:FF:000010">
    <property type="entry name" value="ARF guanine-nucleotide exchange factor GNOM-like"/>
    <property type="match status" value="1"/>
</dbReference>
<dbReference type="Gene3D" id="1.10.220.20">
    <property type="match status" value="1"/>
</dbReference>
<dbReference type="Gene3D" id="1.10.1000.11">
    <property type="entry name" value="Arf Nucleotide-binding Site Opener,domain 2"/>
    <property type="match status" value="1"/>
</dbReference>
<dbReference type="InterPro" id="IPR056604">
    <property type="entry name" value="GBF1-like_TPR"/>
</dbReference>
<dbReference type="InterPro" id="IPR032691">
    <property type="entry name" value="Mon2/Sec7/BIG1-like_HUS"/>
</dbReference>
<dbReference type="InterPro" id="IPR023394">
    <property type="entry name" value="Sec7_C_sf"/>
</dbReference>
<dbReference type="InterPro" id="IPR000904">
    <property type="entry name" value="Sec7_dom"/>
</dbReference>
<dbReference type="InterPro" id="IPR035999">
    <property type="entry name" value="Sec7_dom_sf"/>
</dbReference>
<dbReference type="PANTHER" id="PTHR10663:SF353">
    <property type="entry name" value="ARF GUANINE-NUCLEOTIDE EXCHANGE FACTOR GNL1"/>
    <property type="match status" value="1"/>
</dbReference>
<dbReference type="PANTHER" id="PTHR10663">
    <property type="entry name" value="GUANYL-NUCLEOTIDE EXCHANGE FACTOR"/>
    <property type="match status" value="1"/>
</dbReference>
<dbReference type="Pfam" id="PF01369">
    <property type="entry name" value="Sec7"/>
    <property type="match status" value="1"/>
</dbReference>
<dbReference type="Pfam" id="PF12783">
    <property type="entry name" value="Sec7-like_HUS"/>
    <property type="match status" value="1"/>
</dbReference>
<dbReference type="Pfam" id="PF23325">
    <property type="entry name" value="TPR_28"/>
    <property type="match status" value="1"/>
</dbReference>
<dbReference type="SMART" id="SM00222">
    <property type="entry name" value="Sec7"/>
    <property type="match status" value="1"/>
</dbReference>
<dbReference type="SUPFAM" id="SSF48425">
    <property type="entry name" value="Sec7 domain"/>
    <property type="match status" value="1"/>
</dbReference>
<dbReference type="PROSITE" id="PS50190">
    <property type="entry name" value="SEC7"/>
    <property type="match status" value="1"/>
</dbReference>
<reference key="1">
    <citation type="journal article" date="1998" name="DNA Res.">
        <title>Structural analysis of Arabidopsis thaliana chromosome 5. IV. Sequence features of the regions of 1,456,315 bp covered by nineteen physically assigned P1 and TAC clones.</title>
        <authorList>
            <person name="Sato S."/>
            <person name="Kaneko T."/>
            <person name="Kotani H."/>
            <person name="Nakamura Y."/>
            <person name="Asamizu E."/>
            <person name="Miyajima N."/>
            <person name="Tabata S."/>
        </authorList>
    </citation>
    <scope>NUCLEOTIDE SEQUENCE [LARGE SCALE GENOMIC DNA]</scope>
    <source>
        <strain>cv. Columbia</strain>
    </source>
</reference>
<reference key="2">
    <citation type="journal article" date="2017" name="Plant J.">
        <title>Araport11: a complete reannotation of the Arabidopsis thaliana reference genome.</title>
        <authorList>
            <person name="Cheng C.Y."/>
            <person name="Krishnakumar V."/>
            <person name="Chan A.P."/>
            <person name="Thibaud-Nissen F."/>
            <person name="Schobel S."/>
            <person name="Town C.D."/>
        </authorList>
    </citation>
    <scope>GENOME REANNOTATION</scope>
    <source>
        <strain>cv. Columbia</strain>
    </source>
</reference>
<reference key="3">
    <citation type="journal article" date="2003" name="Cell">
        <title>The Arabidopsis GNOM ARF-GEF mediates endosomal recycling, auxin transport, and auxin-dependent plant growth.</title>
        <authorList>
            <person name="Geldner N."/>
            <person name="Anders N."/>
            <person name="Wolters H."/>
            <person name="Keicher J."/>
            <person name="Kornberger W."/>
            <person name="Muller P."/>
            <person name="Delbarre A."/>
            <person name="Ueda T."/>
            <person name="Nakano A."/>
            <person name="Juergens G."/>
        </authorList>
    </citation>
    <scope>GENE FAMILY</scope>
</reference>
<reference key="4">
    <citation type="journal article" date="2004" name="Mol. Biol. Cell">
        <title>Phylogenetic analysis of Sec7-domain-containing Arf nucleotide exchangers.</title>
        <authorList>
            <person name="Cox R."/>
            <person name="Mason-Gamer R.J."/>
            <person name="Jackson C.L."/>
            <person name="Segev N."/>
        </authorList>
    </citation>
    <scope>GENE FAMILY</scope>
    <scope>NOMENCLATURE</scope>
</reference>
<reference key="5">
    <citation type="journal article" date="2007" name="Nature">
        <title>Functional diversification of closely related ARF-GEFs in protein secretion and recycling.</title>
        <authorList>
            <person name="Richter S."/>
            <person name="Geldner N."/>
            <person name="Schrader J."/>
            <person name="Wolters H."/>
            <person name="Stierhof Y.D."/>
            <person name="Rios G."/>
            <person name="Koncz C."/>
            <person name="Robinson D.G."/>
            <person name="Juergens G."/>
        </authorList>
    </citation>
    <scope>GENE FAMILY</scope>
    <scope>SUBCELLULAR LOCATION</scope>
    <scope>FUNCTION</scope>
    <scope>DISRUPTION PHENOTYPE</scope>
</reference>
<reference key="6">
    <citation type="journal article" date="2007" name="Nature">
        <title>An ARF-GEF acting at the Golgi and in selective endocytosis in polarized plant cells.</title>
        <authorList>
            <person name="Teh O.K."/>
            <person name="Moore I."/>
        </authorList>
    </citation>
    <scope>FUNCTION</scope>
</reference>
<reference key="7">
    <citation type="journal article" date="2009" name="Plant Cell">
        <title>GNOM-LIKE1/ERMO1 and SEC24a/ERMO2 are required for maintenance of endoplasmic reticulum morphology in Arabidopsis thaliana.</title>
        <authorList>
            <person name="Nakano R.T."/>
            <person name="Matsushima R."/>
            <person name="Ueda H."/>
            <person name="Tamura K."/>
            <person name="Shimada T."/>
            <person name="Li L."/>
            <person name="Hayashi Y."/>
            <person name="Kondo M."/>
            <person name="Nishimura M."/>
            <person name="Hara-Nishimura I."/>
        </authorList>
    </citation>
    <scope>FUNCTION</scope>
    <scope>DISRUPTION PHENOTYPE</scope>
</reference>
<reference key="8">
    <citation type="journal article" date="2010" name="Eur. J. Cell Biol.">
        <title>Role of the GNOM gene in Arabidopsis apical-basal patterning--From mutant phenotype to cellular mechanism of protein action.</title>
        <authorList>
            <person name="Richter S."/>
            <person name="Anders N."/>
            <person name="Wolters H."/>
            <person name="Beckmann H."/>
            <person name="Thomann A."/>
            <person name="Heinrich R."/>
            <person name="Schrader J."/>
            <person name="Singh M.K."/>
            <person name="Geldner N."/>
            <person name="Mayer U."/>
            <person name="Juergens G."/>
        </authorList>
    </citation>
    <scope>REVIEW</scope>
    <scope>FUNCTION</scope>
</reference>
<reference key="9">
    <citation type="journal article" date="2010" name="Proc. Natl. Acad. Sci. U.S.A.">
        <title>ADP-ribosylation factor machinery mediates endocytosis in plant cells.</title>
        <authorList>
            <person name="Naramoto S."/>
            <person name="Kleine-Vehn J."/>
            <person name="Robert S."/>
            <person name="Fujimoto M."/>
            <person name="Dainobu T."/>
            <person name="Paciorek T."/>
            <person name="Ueda T."/>
            <person name="Nakano A."/>
            <person name="Van Montagu M.C."/>
            <person name="Fukuda H."/>
            <person name="Friml J."/>
        </authorList>
    </citation>
    <scope>FUNCTION</scope>
</reference>
<feature type="chain" id="PRO_0000420948" description="ARF guanine-nucleotide exchange factor GNL1">
    <location>
        <begin position="1"/>
        <end position="1443"/>
    </location>
</feature>
<feature type="domain" description="SEC7" evidence="2">
    <location>
        <begin position="554"/>
        <end position="743"/>
    </location>
</feature>
<feature type="region of interest" description="Disordered" evidence="3">
    <location>
        <begin position="917"/>
        <end position="949"/>
    </location>
</feature>
<feature type="region of interest" description="Disordered" evidence="3">
    <location>
        <begin position="1424"/>
        <end position="1443"/>
    </location>
</feature>
<feature type="compositionally biased region" description="Polar residues" evidence="3">
    <location>
        <begin position="939"/>
        <end position="949"/>
    </location>
</feature>
<feature type="compositionally biased region" description="Basic and acidic residues" evidence="3">
    <location>
        <begin position="1425"/>
        <end position="1435"/>
    </location>
</feature>
<feature type="active site" evidence="1">
    <location>
        <position position="658"/>
    </location>
</feature>
<name>GNL1_ARATH</name>
<keyword id="KW-0963">Cytoplasm</keyword>
<keyword id="KW-0254">Endocytosis</keyword>
<keyword id="KW-0931">ER-Golgi transport</keyword>
<keyword id="KW-0333">Golgi apparatus</keyword>
<keyword id="KW-0344">Guanine-nucleotide releasing factor</keyword>
<keyword id="KW-0472">Membrane</keyword>
<keyword id="KW-0653">Protein transport</keyword>
<keyword id="KW-1185">Reference proteome</keyword>
<keyword id="KW-0813">Transport</keyword>
<sequence length="1443" mass="161954">MGYQNHPSGSNSFHGEFKRCHSKPSKGAVASMINSEIGAVLAVMRRNVRWGVRYIADDDQLEHSLIHSLKELRKQIFSWQSNWQYVDPRLYIQPFLDVILSDETGAPITGVALSSVYKILTLEVFTLETVNVGEAMHIIVDAVKSCRFEVTDPASEEVVLMKILQVLLACVKSKASNGLSNQDICTIVNTCLRVVHQSSSKSELLQRIARHTMHELIRCIFSQLPFISPLANECELHVDNKVGTVDWDPNSGEKRVENGNIASISDTLGTDKDDPSSEMVIPETDLRNDEKKTEVSDDLNAAANGENAMMAPYGIPCMVEIFHFLCTLLNVGENGEVNSRSNPIAFDEDVPLFALGLINSAIELGGPSFREHPKLLTLIQDDLFCNLMQFGMSMSPLILSTVCSIVLNLYLNLRTELKVQLEAFFSYVLLRIAQSKHGSSYQQQEVAMEALVDLCRQHTFIAEVFANFDCDITCSNVFEDVSNLLSKNAFPVNGPLSAMHILALDGLISMVQGMAERVGEELPASDVPTHEERYEEFWTVRCENYGDPNFWVPFVRKVKHIKKKLMLGADRFNRDPNKGLQYLQGVHLLPEKLDPKSVACFFRYTCGLDKNVMGDFLGNHDQFCIQVLHEFAKTFDFQNMNLATALRLFVGTFKLSGEAQKIHRVLEAFSERYYEQSPHILIDKDAAFVLAYSIILLNTDQHNAQVKTRMTEEDFIRNNRTINGGADLPREYLSEIYHSIRHSEIQMDEDKGTGFQLMTASRWISVIYKSKETSPYIQCDAASHLDRDMFYIVSGPTIAATSVVFEQAEQEDVLRRCIDGLLAIAKLSAYYHLNSVLDDLVVSLCKFTPFFAPLSADEAVLVLGEDARARMATEAVFLIANKYGDYISAGWKNILECVLSLNKLHILPDHIASDAADDPELSTSNLEQEKPSANPVPVVSQSQPSAMPRKSSSFIGRFLLSFDSEETKPLPSEEELAAYKHARGIVKDCHIDSIFSDSKFLQAESLQQLVNSLIRASGKDEASSVFCLELLIAVTLNNRDRILLIWPTVYEHILGIVQLTLTPCTLVEKAVFGVLKICQRLLPYKENLTDELLKSLQLVLKLKAKVADAYCERIAQEVVRLVKANASHVRSRTGWRTIISLLSITARHPEASEAGFEALRFIMSEGAHLLPSNYELCLDAASHFAESRVGEVDRSISAIDLMSNSVFCLARWSQEAKNSIGETDAMMKLSEDIGKMWLKLVKNLKKVCLDQRDEVRNHAISMLQRAIAGADGIMLPQPLWFQCFDSAVFILLDDVLTFSIENSRKTLKKTVEETLVLATKLMSKAFLQSLQDISQQPSFCRLWVGVLNRLETYMSTEFRGKRSEKVNELIPELLKNTLLVMKATGVLLPGDDIGSDSFWQLTWLHVNKISPSLQSEVFPQEELDQFQRRNAKPEDPPVPGNEV</sequence>
<protein>
    <recommendedName>
        <fullName>ARF guanine-nucleotide exchange factor GNL1</fullName>
    </recommendedName>
    <alternativeName>
        <fullName>Protein ENDOPLASMIC RETICULUM MORPHOLOGY 1</fullName>
    </alternativeName>
    <alternativeName>
        <fullName>Protein GNOM-like 1</fullName>
    </alternativeName>
</protein>
<evidence type="ECO:0000250" key="1"/>
<evidence type="ECO:0000255" key="2">
    <source>
        <dbReference type="PROSITE-ProRule" id="PRU00189"/>
    </source>
</evidence>
<evidence type="ECO:0000256" key="3">
    <source>
        <dbReference type="SAM" id="MobiDB-lite"/>
    </source>
</evidence>
<evidence type="ECO:0000269" key="4">
    <source>
    </source>
</evidence>
<evidence type="ECO:0000269" key="5">
    <source>
    </source>
</evidence>
<evidence type="ECO:0000269" key="6">
    <source>
    </source>
</evidence>
<evidence type="ECO:0000269" key="7">
    <source>
    </source>
</evidence>
<evidence type="ECO:0000269" key="8">
    <source>
    </source>
</evidence>
<comment type="function">
    <text evidence="4 5 6 7 8">Activates the ARF proteins by exchanging bound GDP for free GTP. Plays a role in vesicular protein sorting. Acts as the major regulator of retrograde Golgi to endoplasmic reticulum trafficking but is also involved in the endocytosis process. Could function redundantly with GNOM. Regulates vesicle trafficking required for the coordinated polar localization of auxin efflux carriers which in turn determines the direction of auxin flow. Mediates the endocytosis of PIN2 from plasma membrane to endosomal compartments. Required for maintenance of endoplasmic reticulum morphology.</text>
</comment>
<comment type="subunit">
    <text evidence="1">Homodimer.</text>
</comment>
<comment type="subcellular location">
    <subcellularLocation>
        <location evidence="4">Cytoplasm</location>
        <location evidence="4">Cytosol</location>
    </subcellularLocation>
    <subcellularLocation>
        <location evidence="4">Golgi apparatus membrane</location>
        <topology evidence="4">Peripheral membrane protein</topology>
        <orientation evidence="4">Cytoplasmic side</orientation>
    </subcellularLocation>
    <text>Soluble and partially membrane-bound.</text>
</comment>
<comment type="disruption phenotype">
    <text evidence="4 6">Slightly abnormal Golgi stacks with laterally expanded cisternae. Abnormal formation of spherical bodies in the endoplasmic reticulum.</text>
</comment>
<gene>
    <name type="primary">GNL1</name>
    <name type="synonym">ERMO1</name>
    <name type="synonym">GBF1</name>
    <name type="ordered locus">At5g39500</name>
    <name type="ORF">MUL8.20</name>
</gene>